<reference key="1">
    <citation type="submission" date="2003-01" db="EMBL/GenBank/DDBJ databases">
        <authorList>
            <consortium name="NIH - Zebrafish Gene Collection (ZGC) project"/>
        </authorList>
    </citation>
    <scope>NUCLEOTIDE SEQUENCE [LARGE SCALE MRNA]</scope>
    <source>
        <strain>AB</strain>
    </source>
</reference>
<gene>
    <name type="primary">scrn3</name>
    <name type="ORF">zgc:55430</name>
</gene>
<sequence length="417" mass="46974">MYPRSCDTFVALPPSTEGQRIIFGKNSDRPCDEVQEVVYFPAKEHEPGKVECTYIEIEQVEKTFAVVLSRPAWLWGAEMGANEHQVCIGNEAVWGRESADGDEALLGMDLVRLALERADTAEKAVDVITDLLEKYGQGGNCMEDECGFTYHNSFLISDRKEAWVLETAGKHWAAERVEAGYRNISNQYSITTKIDKEHPGMRTYAKEQGWWDGESEFSFTDVYSYSSTARIQAAGGRYCEGQKLLQKSNGHISAQTMMDILRDKESGINMEGMFMSTGSMVSVIPKADHLPGVHFFTATPDPERSVFKPFVFVSDVPPLKHTSSPCFGEEDPVKKKPRFQSKPNRKHPLFLKHEVAAAIIDSSGERGQKIEKEMRDLEKQKLEEMEKYLTEGVEDSSLLVHLFTDTVEEEFSVYSSA</sequence>
<dbReference type="EMBL" id="BC044168">
    <property type="protein sequence ID" value="AAH44168.1"/>
    <property type="molecule type" value="mRNA"/>
</dbReference>
<dbReference type="RefSeq" id="NP_956032.1">
    <property type="nucleotide sequence ID" value="NM_199738.1"/>
</dbReference>
<dbReference type="SMR" id="Q803W1"/>
<dbReference type="FunCoup" id="Q803W1">
    <property type="interactions" value="187"/>
</dbReference>
<dbReference type="STRING" id="7955.ENSDARP00000014414"/>
<dbReference type="MEROPS" id="C69.005"/>
<dbReference type="PaxDb" id="7955-ENSDARP00000014414"/>
<dbReference type="Ensembl" id="ENSDART00000016710">
    <property type="protein sequence ID" value="ENSDARP00000014414"/>
    <property type="gene ID" value="ENSDARG00000016611"/>
</dbReference>
<dbReference type="GeneID" id="326058"/>
<dbReference type="KEGG" id="dre:326058"/>
<dbReference type="AGR" id="ZFIN:ZDB-GENE-030131-4783"/>
<dbReference type="CTD" id="79634"/>
<dbReference type="ZFIN" id="ZDB-GENE-030131-4783">
    <property type="gene designation" value="scrn3"/>
</dbReference>
<dbReference type="eggNOG" id="ENOG502QPIA">
    <property type="taxonomic scope" value="Eukaryota"/>
</dbReference>
<dbReference type="HOGENOM" id="CLU_046840_0_0_1"/>
<dbReference type="InParanoid" id="Q803W1"/>
<dbReference type="OrthoDB" id="5175656at2759"/>
<dbReference type="PhylomeDB" id="Q803W1"/>
<dbReference type="TreeFam" id="TF323890"/>
<dbReference type="PRO" id="PR:Q803W1"/>
<dbReference type="Proteomes" id="UP000000437">
    <property type="component" value="Chromosome 9"/>
</dbReference>
<dbReference type="Bgee" id="ENSDARG00000016611">
    <property type="expression patterns" value="Expressed in muscle tissue and 23 other cell types or tissues"/>
</dbReference>
<dbReference type="ExpressionAtlas" id="Q803W1">
    <property type="expression patterns" value="baseline and differential"/>
</dbReference>
<dbReference type="GO" id="GO:0070004">
    <property type="term" value="F:cysteine-type exopeptidase activity"/>
    <property type="evidence" value="ECO:0007669"/>
    <property type="project" value="InterPro"/>
</dbReference>
<dbReference type="GO" id="GO:0016805">
    <property type="term" value="F:dipeptidase activity"/>
    <property type="evidence" value="ECO:0007669"/>
    <property type="project" value="InterPro"/>
</dbReference>
<dbReference type="GO" id="GO:0006508">
    <property type="term" value="P:proteolysis"/>
    <property type="evidence" value="ECO:0007669"/>
    <property type="project" value="InterPro"/>
</dbReference>
<dbReference type="FunFam" id="3.60.60.10:FF:000001">
    <property type="entry name" value="Secernin 1"/>
    <property type="match status" value="1"/>
</dbReference>
<dbReference type="Gene3D" id="3.60.60.10">
    <property type="entry name" value="Penicillin V Acylase, Chain A"/>
    <property type="match status" value="1"/>
</dbReference>
<dbReference type="InterPro" id="IPR005322">
    <property type="entry name" value="Peptidase_C69"/>
</dbReference>
<dbReference type="PANTHER" id="PTHR12994">
    <property type="entry name" value="SECERNIN"/>
    <property type="match status" value="1"/>
</dbReference>
<dbReference type="PANTHER" id="PTHR12994:SF18">
    <property type="entry name" value="SECERNIN-3"/>
    <property type="match status" value="1"/>
</dbReference>
<dbReference type="Pfam" id="PF03577">
    <property type="entry name" value="Peptidase_C69"/>
    <property type="match status" value="1"/>
</dbReference>
<name>SCRN3_DANRE</name>
<feature type="propeptide" id="PRO_0000461896" evidence="1">
    <location>
        <begin position="1"/>
        <end position="5"/>
    </location>
</feature>
<feature type="chain" id="PRO_0000262561" description="Secernin-3">
    <location>
        <begin position="6"/>
        <end position="417"/>
    </location>
</feature>
<feature type="active site" evidence="3">
    <location>
        <position position="6"/>
    </location>
</feature>
<feature type="modified residue" description="Glyoxylic acid (Cys); alternate" evidence="1">
    <location>
        <position position="6"/>
    </location>
</feature>
<feature type="modified residue" description="Pyruvic acid (Cys); alternate" evidence="1">
    <location>
        <position position="6"/>
    </location>
</feature>
<evidence type="ECO:0000250" key="1">
    <source>
        <dbReference type="UniProtKB" id="Q0VDG4"/>
    </source>
</evidence>
<evidence type="ECO:0000250" key="2">
    <source>
        <dbReference type="UniProtKB" id="Q3TMH2"/>
    </source>
</evidence>
<evidence type="ECO:0000255" key="3"/>
<evidence type="ECO:0000305" key="4"/>
<accession>Q803W1</accession>
<organism>
    <name type="scientific">Danio rerio</name>
    <name type="common">Zebrafish</name>
    <name type="synonym">Brachydanio rerio</name>
    <dbReference type="NCBI Taxonomy" id="7955"/>
    <lineage>
        <taxon>Eukaryota</taxon>
        <taxon>Metazoa</taxon>
        <taxon>Chordata</taxon>
        <taxon>Craniata</taxon>
        <taxon>Vertebrata</taxon>
        <taxon>Euteleostomi</taxon>
        <taxon>Actinopterygii</taxon>
        <taxon>Neopterygii</taxon>
        <taxon>Teleostei</taxon>
        <taxon>Ostariophysi</taxon>
        <taxon>Cypriniformes</taxon>
        <taxon>Danionidae</taxon>
        <taxon>Danioninae</taxon>
        <taxon>Danio</taxon>
    </lineage>
</organism>
<protein>
    <recommendedName>
        <fullName>Secernin-3</fullName>
    </recommendedName>
</protein>
<proteinExistence type="evidence at transcript level"/>
<keyword id="KW-0670">Pyruvate</keyword>
<keyword id="KW-1185">Reference proteome</keyword>
<comment type="function">
    <text evidence="2">Plays a role in thermal nociception.</text>
</comment>
<comment type="similarity">
    <text evidence="4">Belongs to the peptidase C69 family. Secernin subfamily.</text>
</comment>